<accession>A8F524</accession>
<comment type="function">
    <text evidence="1">Removes the formyl group from the N-terminal Met of newly synthesized proteins. Requires at least a dipeptide for an efficient rate of reaction. N-terminal L-methionine is a prerequisite for activity but the enzyme has broad specificity at other positions.</text>
</comment>
<comment type="catalytic activity">
    <reaction evidence="1">
        <text>N-terminal N-formyl-L-methionyl-[peptide] + H2O = N-terminal L-methionyl-[peptide] + formate</text>
        <dbReference type="Rhea" id="RHEA:24420"/>
        <dbReference type="Rhea" id="RHEA-COMP:10639"/>
        <dbReference type="Rhea" id="RHEA-COMP:10640"/>
        <dbReference type="ChEBI" id="CHEBI:15377"/>
        <dbReference type="ChEBI" id="CHEBI:15740"/>
        <dbReference type="ChEBI" id="CHEBI:49298"/>
        <dbReference type="ChEBI" id="CHEBI:64731"/>
        <dbReference type="EC" id="3.5.1.88"/>
    </reaction>
</comment>
<comment type="cofactor">
    <cofactor evidence="1">
        <name>Fe(2+)</name>
        <dbReference type="ChEBI" id="CHEBI:29033"/>
    </cofactor>
    <text evidence="1">Binds 1 Fe(2+) ion.</text>
</comment>
<comment type="similarity">
    <text evidence="1">Belongs to the polypeptide deformylase family.</text>
</comment>
<proteinExistence type="inferred from homology"/>
<name>DEF_PSELT</name>
<gene>
    <name evidence="1" type="primary">def</name>
    <name type="ordered locus">Tlet_0692</name>
</gene>
<evidence type="ECO:0000255" key="1">
    <source>
        <dbReference type="HAMAP-Rule" id="MF_00163"/>
    </source>
</evidence>
<protein>
    <recommendedName>
        <fullName evidence="1">Peptide deformylase</fullName>
        <shortName evidence="1">PDF</shortName>
        <ecNumber evidence="1">3.5.1.88</ecNumber>
    </recommendedName>
    <alternativeName>
        <fullName evidence="1">Polypeptide deformylase</fullName>
    </alternativeName>
</protein>
<dbReference type="EC" id="3.5.1.88" evidence="1"/>
<dbReference type="EMBL" id="CP000812">
    <property type="protein sequence ID" value="ABV33258.1"/>
    <property type="molecule type" value="Genomic_DNA"/>
</dbReference>
<dbReference type="RefSeq" id="WP_012002739.1">
    <property type="nucleotide sequence ID" value="NZ_BSDV01000001.1"/>
</dbReference>
<dbReference type="SMR" id="A8F524"/>
<dbReference type="STRING" id="416591.Tlet_0692"/>
<dbReference type="KEGG" id="tle:Tlet_0692"/>
<dbReference type="eggNOG" id="COG0242">
    <property type="taxonomic scope" value="Bacteria"/>
</dbReference>
<dbReference type="HOGENOM" id="CLU_061901_4_2_0"/>
<dbReference type="OrthoDB" id="9784988at2"/>
<dbReference type="Proteomes" id="UP000002016">
    <property type="component" value="Chromosome"/>
</dbReference>
<dbReference type="GO" id="GO:0046872">
    <property type="term" value="F:metal ion binding"/>
    <property type="evidence" value="ECO:0007669"/>
    <property type="project" value="UniProtKB-KW"/>
</dbReference>
<dbReference type="GO" id="GO:0042586">
    <property type="term" value="F:peptide deformylase activity"/>
    <property type="evidence" value="ECO:0007669"/>
    <property type="project" value="UniProtKB-UniRule"/>
</dbReference>
<dbReference type="GO" id="GO:0043686">
    <property type="term" value="P:co-translational protein modification"/>
    <property type="evidence" value="ECO:0007669"/>
    <property type="project" value="TreeGrafter"/>
</dbReference>
<dbReference type="GO" id="GO:0006412">
    <property type="term" value="P:translation"/>
    <property type="evidence" value="ECO:0007669"/>
    <property type="project" value="UniProtKB-UniRule"/>
</dbReference>
<dbReference type="CDD" id="cd00487">
    <property type="entry name" value="Pep_deformylase"/>
    <property type="match status" value="1"/>
</dbReference>
<dbReference type="Gene3D" id="3.90.45.10">
    <property type="entry name" value="Peptide deformylase"/>
    <property type="match status" value="1"/>
</dbReference>
<dbReference type="HAMAP" id="MF_00163">
    <property type="entry name" value="Pep_deformylase"/>
    <property type="match status" value="1"/>
</dbReference>
<dbReference type="InterPro" id="IPR023635">
    <property type="entry name" value="Peptide_deformylase"/>
</dbReference>
<dbReference type="InterPro" id="IPR036821">
    <property type="entry name" value="Peptide_deformylase_sf"/>
</dbReference>
<dbReference type="NCBIfam" id="TIGR00079">
    <property type="entry name" value="pept_deformyl"/>
    <property type="match status" value="1"/>
</dbReference>
<dbReference type="NCBIfam" id="NF001159">
    <property type="entry name" value="PRK00150.1-3"/>
    <property type="match status" value="1"/>
</dbReference>
<dbReference type="PANTHER" id="PTHR10458">
    <property type="entry name" value="PEPTIDE DEFORMYLASE"/>
    <property type="match status" value="1"/>
</dbReference>
<dbReference type="PANTHER" id="PTHR10458:SF22">
    <property type="entry name" value="PEPTIDE DEFORMYLASE"/>
    <property type="match status" value="1"/>
</dbReference>
<dbReference type="Pfam" id="PF01327">
    <property type="entry name" value="Pep_deformylase"/>
    <property type="match status" value="1"/>
</dbReference>
<dbReference type="PIRSF" id="PIRSF004749">
    <property type="entry name" value="Pep_def"/>
    <property type="match status" value="1"/>
</dbReference>
<dbReference type="PRINTS" id="PR01576">
    <property type="entry name" value="PDEFORMYLASE"/>
</dbReference>
<dbReference type="SUPFAM" id="SSF56420">
    <property type="entry name" value="Peptide deformylase"/>
    <property type="match status" value="1"/>
</dbReference>
<organism>
    <name type="scientific">Pseudothermotoga lettingae (strain ATCC BAA-301 / DSM 14385 / NBRC 107922 / TMO)</name>
    <name type="common">Thermotoga lettingae</name>
    <dbReference type="NCBI Taxonomy" id="416591"/>
    <lineage>
        <taxon>Bacteria</taxon>
        <taxon>Thermotogati</taxon>
        <taxon>Thermotogota</taxon>
        <taxon>Thermotogae</taxon>
        <taxon>Thermotogales</taxon>
        <taxon>Thermotogaceae</taxon>
        <taxon>Pseudothermotoga</taxon>
    </lineage>
</organism>
<sequence length="171" mass="19762">MVKKIRLLGDPVLRKKSKNVERVDETTISLIKDLFETMYATDGIGLAAPQIGVSLRIFVMDDGKPRVFINPEIIYKSEEKEIAEEGCLSVPEVFEDVERSKEVTVRYMNEHGEEVEESFVDYSARVVQHEYDHLQGVLFIDLIPSSRRFAIRKKLIEIVRQSQKTDYAERP</sequence>
<feature type="chain" id="PRO_1000058246" description="Peptide deformylase">
    <location>
        <begin position="1"/>
        <end position="171"/>
    </location>
</feature>
<feature type="active site" evidence="1">
    <location>
        <position position="130"/>
    </location>
</feature>
<feature type="binding site" evidence="1">
    <location>
        <position position="87"/>
    </location>
    <ligand>
        <name>Fe cation</name>
        <dbReference type="ChEBI" id="CHEBI:24875"/>
    </ligand>
</feature>
<feature type="binding site" evidence="1">
    <location>
        <position position="129"/>
    </location>
    <ligand>
        <name>Fe cation</name>
        <dbReference type="ChEBI" id="CHEBI:24875"/>
    </ligand>
</feature>
<feature type="binding site" evidence="1">
    <location>
        <position position="133"/>
    </location>
    <ligand>
        <name>Fe cation</name>
        <dbReference type="ChEBI" id="CHEBI:24875"/>
    </ligand>
</feature>
<keyword id="KW-0378">Hydrolase</keyword>
<keyword id="KW-0408">Iron</keyword>
<keyword id="KW-0479">Metal-binding</keyword>
<keyword id="KW-0648">Protein biosynthesis</keyword>
<keyword id="KW-1185">Reference proteome</keyword>
<reference key="1">
    <citation type="submission" date="2007-08" db="EMBL/GenBank/DDBJ databases">
        <title>Complete sequence of Thermotoga lettingae TMO.</title>
        <authorList>
            <consortium name="US DOE Joint Genome Institute"/>
            <person name="Copeland A."/>
            <person name="Lucas S."/>
            <person name="Lapidus A."/>
            <person name="Barry K."/>
            <person name="Glavina del Rio T."/>
            <person name="Dalin E."/>
            <person name="Tice H."/>
            <person name="Pitluck S."/>
            <person name="Foster B."/>
            <person name="Bruce D."/>
            <person name="Schmutz J."/>
            <person name="Larimer F."/>
            <person name="Land M."/>
            <person name="Hauser L."/>
            <person name="Kyrpides N."/>
            <person name="Mikhailova N."/>
            <person name="Nelson K."/>
            <person name="Gogarten J.P."/>
            <person name="Noll K."/>
            <person name="Richardson P."/>
        </authorList>
    </citation>
    <scope>NUCLEOTIDE SEQUENCE [LARGE SCALE GENOMIC DNA]</scope>
    <source>
        <strain>ATCC BAA-301 / DSM 14385 / NBRC 107922 / TMO</strain>
    </source>
</reference>